<reference key="1">
    <citation type="journal article" date="2001" name="Nature">
        <title>Genome sequence of enterohaemorrhagic Escherichia coli O157:H7.</title>
        <authorList>
            <person name="Perna N.T."/>
            <person name="Plunkett G. III"/>
            <person name="Burland V."/>
            <person name="Mau B."/>
            <person name="Glasner J.D."/>
            <person name="Rose D.J."/>
            <person name="Mayhew G.F."/>
            <person name="Evans P.S."/>
            <person name="Gregor J."/>
            <person name="Kirkpatrick H.A."/>
            <person name="Posfai G."/>
            <person name="Hackett J."/>
            <person name="Klink S."/>
            <person name="Boutin A."/>
            <person name="Shao Y."/>
            <person name="Miller L."/>
            <person name="Grotbeck E.J."/>
            <person name="Davis N.W."/>
            <person name="Lim A."/>
            <person name="Dimalanta E.T."/>
            <person name="Potamousis K."/>
            <person name="Apodaca J."/>
            <person name="Anantharaman T.S."/>
            <person name="Lin J."/>
            <person name="Yen G."/>
            <person name="Schwartz D.C."/>
            <person name="Welch R.A."/>
            <person name="Blattner F.R."/>
        </authorList>
    </citation>
    <scope>NUCLEOTIDE SEQUENCE [LARGE SCALE GENOMIC DNA]</scope>
    <source>
        <strain>O157:H7 / EDL933 / ATCC 700927 / EHEC</strain>
    </source>
</reference>
<reference key="2">
    <citation type="journal article" date="2001" name="DNA Res.">
        <title>Complete genome sequence of enterohemorrhagic Escherichia coli O157:H7 and genomic comparison with a laboratory strain K-12.</title>
        <authorList>
            <person name="Hayashi T."/>
            <person name="Makino K."/>
            <person name="Ohnishi M."/>
            <person name="Kurokawa K."/>
            <person name="Ishii K."/>
            <person name="Yokoyama K."/>
            <person name="Han C.-G."/>
            <person name="Ohtsubo E."/>
            <person name="Nakayama K."/>
            <person name="Murata T."/>
            <person name="Tanaka M."/>
            <person name="Tobe T."/>
            <person name="Iida T."/>
            <person name="Takami H."/>
            <person name="Honda T."/>
            <person name="Sasakawa C."/>
            <person name="Ogasawara N."/>
            <person name="Yasunaga T."/>
            <person name="Kuhara S."/>
            <person name="Shiba T."/>
            <person name="Hattori M."/>
            <person name="Shinagawa H."/>
        </authorList>
    </citation>
    <scope>NUCLEOTIDE SEQUENCE [LARGE SCALE GENOMIC DNA]</scope>
    <source>
        <strain>O157:H7 / Sakai / RIMD 0509952 / EHEC</strain>
    </source>
</reference>
<feature type="chain" id="PRO_0000173323" description="Multidrug export protein EmrB">
    <location>
        <begin position="1"/>
        <end position="512"/>
    </location>
</feature>
<feature type="topological domain" description="Cytoplasmic" evidence="2">
    <location>
        <begin position="1"/>
        <end position="12"/>
    </location>
</feature>
<feature type="transmembrane region" description="Helical" evidence="2">
    <location>
        <begin position="13"/>
        <end position="38"/>
    </location>
</feature>
<feature type="topological domain" description="Extracellular" evidence="2">
    <location>
        <begin position="39"/>
        <end position="51"/>
    </location>
</feature>
<feature type="transmembrane region" description="Helical" evidence="2">
    <location>
        <begin position="52"/>
        <end position="72"/>
    </location>
</feature>
<feature type="topological domain" description="Cytoplasmic" evidence="2">
    <location>
        <begin position="73"/>
        <end position="81"/>
    </location>
</feature>
<feature type="transmembrane region" description="Helical" evidence="2">
    <location>
        <begin position="82"/>
        <end position="100"/>
    </location>
</feature>
<feature type="topological domain" description="Extracellular" evidence="2">
    <location>
        <begin position="101"/>
        <end position="109"/>
    </location>
</feature>
<feature type="transmembrane region" description="Helical" evidence="2">
    <location>
        <begin position="110"/>
        <end position="128"/>
    </location>
</feature>
<feature type="topological domain" description="Cytoplasmic" evidence="2">
    <location>
        <begin position="129"/>
        <end position="136"/>
    </location>
</feature>
<feature type="transmembrane region" description="Helical" evidence="2">
    <location>
        <begin position="137"/>
        <end position="159"/>
    </location>
</feature>
<feature type="topological domain" description="Extracellular" evidence="2">
    <location>
        <begin position="160"/>
        <end position="164"/>
    </location>
</feature>
<feature type="transmembrane region" description="Helical" evidence="2">
    <location>
        <begin position="165"/>
        <end position="189"/>
    </location>
</feature>
<feature type="topological domain" description="Cytoplasmic" evidence="2">
    <location>
        <begin position="190"/>
        <end position="202"/>
    </location>
</feature>
<feature type="transmembrane region" description="Helical" evidence="2">
    <location>
        <begin position="203"/>
        <end position="223"/>
    </location>
</feature>
<feature type="topological domain" description="Extracellular" evidence="2">
    <location>
        <begin position="224"/>
        <end position="233"/>
    </location>
</feature>
<feature type="transmembrane region" description="Helical" evidence="2">
    <location>
        <begin position="234"/>
        <end position="249"/>
    </location>
</feature>
<feature type="topological domain" description="Cytoplasmic" evidence="2">
    <location>
        <begin position="250"/>
        <end position="271"/>
    </location>
</feature>
<feature type="transmembrane region" description="Helical" evidence="2">
    <location>
        <begin position="272"/>
        <end position="295"/>
    </location>
</feature>
<feature type="topological domain" description="Extracellular" evidence="2">
    <location>
        <begin position="296"/>
        <end position="305"/>
    </location>
</feature>
<feature type="transmembrane region" description="Helical" evidence="2">
    <location>
        <begin position="306"/>
        <end position="329"/>
    </location>
</feature>
<feature type="topological domain" description="Cytoplasmic" evidence="2">
    <location>
        <begin position="330"/>
        <end position="335"/>
    </location>
</feature>
<feature type="transmembrane region" description="Helical" evidence="2">
    <location>
        <begin position="336"/>
        <end position="355"/>
    </location>
</feature>
<feature type="topological domain" description="Extracellular" evidence="2">
    <location>
        <begin position="356"/>
        <end position="363"/>
    </location>
</feature>
<feature type="transmembrane region" description="Helical" evidence="2">
    <location>
        <begin position="364"/>
        <end position="387"/>
    </location>
</feature>
<feature type="topological domain" description="Cytoplasmic" evidence="2">
    <location>
        <begin position="388"/>
        <end position="407"/>
    </location>
</feature>
<feature type="transmembrane region" description="Helical" evidence="2">
    <location>
        <begin position="408"/>
        <end position="428"/>
    </location>
</feature>
<feature type="topological domain" description="Extracellular" evidence="2">
    <location>
        <begin position="429"/>
        <end position="481"/>
    </location>
</feature>
<feature type="transmembrane region" description="Helical" evidence="2">
    <location>
        <begin position="482"/>
        <end position="504"/>
    </location>
</feature>
<feature type="topological domain" description="Cytoplasmic" evidence="2">
    <location>
        <begin position="505"/>
        <end position="512"/>
    </location>
</feature>
<dbReference type="EMBL" id="AE005174">
    <property type="protein sequence ID" value="AAG57795.1"/>
    <property type="molecule type" value="Genomic_DNA"/>
</dbReference>
<dbReference type="EMBL" id="BA000007">
    <property type="protein sequence ID" value="BAB36971.1"/>
    <property type="molecule type" value="Genomic_DNA"/>
</dbReference>
<dbReference type="PIR" id="D91072">
    <property type="entry name" value="D91072"/>
</dbReference>
<dbReference type="RefSeq" id="WP_001295176.1">
    <property type="nucleotide sequence ID" value="NZ_VOAI01000003.1"/>
</dbReference>
<dbReference type="SMR" id="P0AEJ1"/>
<dbReference type="STRING" id="155864.Z3987"/>
<dbReference type="GeneID" id="93779325"/>
<dbReference type="KEGG" id="ece:Z3987"/>
<dbReference type="KEGG" id="ecs:ECs_3548"/>
<dbReference type="PATRIC" id="fig|386585.9.peg.3704"/>
<dbReference type="eggNOG" id="COG2814">
    <property type="taxonomic scope" value="Bacteria"/>
</dbReference>
<dbReference type="HOGENOM" id="CLU_000960_28_0_6"/>
<dbReference type="OMA" id="HKLHNNL"/>
<dbReference type="Proteomes" id="UP000000558">
    <property type="component" value="Chromosome"/>
</dbReference>
<dbReference type="Proteomes" id="UP000002519">
    <property type="component" value="Chromosome"/>
</dbReference>
<dbReference type="GO" id="GO:0005886">
    <property type="term" value="C:plasma membrane"/>
    <property type="evidence" value="ECO:0007669"/>
    <property type="project" value="UniProtKB-SubCell"/>
</dbReference>
<dbReference type="GO" id="GO:0022857">
    <property type="term" value="F:transmembrane transporter activity"/>
    <property type="evidence" value="ECO:0007669"/>
    <property type="project" value="InterPro"/>
</dbReference>
<dbReference type="GO" id="GO:0046677">
    <property type="term" value="P:response to antibiotic"/>
    <property type="evidence" value="ECO:0007669"/>
    <property type="project" value="UniProtKB-KW"/>
</dbReference>
<dbReference type="CDD" id="cd17503">
    <property type="entry name" value="MFS_LmrB_MDR_like"/>
    <property type="match status" value="1"/>
</dbReference>
<dbReference type="FunFam" id="1.20.1250.20:FF:000019">
    <property type="entry name" value="Multidrug resistance protein B"/>
    <property type="match status" value="1"/>
</dbReference>
<dbReference type="FunFam" id="1.20.1720.10:FF:000002">
    <property type="entry name" value="Multidrug resistance protein B"/>
    <property type="match status" value="1"/>
</dbReference>
<dbReference type="Gene3D" id="1.20.1250.20">
    <property type="entry name" value="MFS general substrate transporter like domains"/>
    <property type="match status" value="1"/>
</dbReference>
<dbReference type="Gene3D" id="1.20.1720.10">
    <property type="entry name" value="Multidrug resistance protein D"/>
    <property type="match status" value="1"/>
</dbReference>
<dbReference type="InterPro" id="IPR004638">
    <property type="entry name" value="EmrB-like"/>
</dbReference>
<dbReference type="InterPro" id="IPR011701">
    <property type="entry name" value="MFS"/>
</dbReference>
<dbReference type="InterPro" id="IPR020846">
    <property type="entry name" value="MFS_dom"/>
</dbReference>
<dbReference type="InterPro" id="IPR036259">
    <property type="entry name" value="MFS_trans_sf"/>
</dbReference>
<dbReference type="NCBIfam" id="TIGR00711">
    <property type="entry name" value="efflux_EmrB"/>
    <property type="match status" value="1"/>
</dbReference>
<dbReference type="NCBIfam" id="NF000391">
    <property type="entry name" value="EmrB"/>
    <property type="match status" value="1"/>
</dbReference>
<dbReference type="PANTHER" id="PTHR42718">
    <property type="entry name" value="MAJOR FACILITATOR SUPERFAMILY MULTIDRUG TRANSPORTER MFSC"/>
    <property type="match status" value="1"/>
</dbReference>
<dbReference type="PANTHER" id="PTHR42718:SF9">
    <property type="entry name" value="MAJOR FACILITATOR SUPERFAMILY MULTIDRUG TRANSPORTER MFSC"/>
    <property type="match status" value="1"/>
</dbReference>
<dbReference type="Pfam" id="PF07690">
    <property type="entry name" value="MFS_1"/>
    <property type="match status" value="1"/>
</dbReference>
<dbReference type="SUPFAM" id="SSF103473">
    <property type="entry name" value="MFS general substrate transporter"/>
    <property type="match status" value="1"/>
</dbReference>
<dbReference type="PROSITE" id="PS50850">
    <property type="entry name" value="MFS"/>
    <property type="match status" value="1"/>
</dbReference>
<comment type="function">
    <text evidence="1">Part of the tripartite efflux system EmrAB-TolC, which confers resistance to antibiotics.</text>
</comment>
<comment type="subunit">
    <text evidence="1">Part of the tripartite efflux system EmrAB-TolC, which is composed of an inner membrane transporter, EmrB, a periplasmic membrane fusion protein, EmrA, and an outer membrane component, TolC. The complex forms a large protein conduit and can translocate molecules across both the inner and outer membranes. Interacts with EmrA (By similarity).</text>
</comment>
<comment type="subcellular location">
    <subcellularLocation>
        <location evidence="1">Cell inner membrane</location>
        <topology evidence="1">Multi-pass membrane protein</topology>
    </subcellularLocation>
</comment>
<comment type="similarity">
    <text evidence="3">Belongs to the major facilitator superfamily. EmrB family.</text>
</comment>
<sequence>MQQQKPLEGAQLVIMTIALSLATFMQVLDSTIANVAIPTIAGNLGSSLSQGTWVITSFGVANAISIPLTGWLAKRVGEVKLFLWSTIAFAIASWACGVSSSLNMLIFFRVIQGIVAGPLIPLSQSLLLNNYPPAKRSIALALWSMTVIVAPICGPILGGYISDNYHWGWIFFINVPIGVAVVLMTLQTLRGRETRTERRRIDAVGLALLVIGIGSLQIMLDRGKELDWFSSQEIIILTVVAVVAICFLIVWELTDDNPIVDLSLFKSRNFTIGCLCISLAYMLYFGAIVLLPQLLQEVYGYTATWAGLASAPVGIIPVILSPIIGRFAHKLDMRRLVTFSFIMYAVCFYWRAYTFEPGMDFGASAWPQFIQGFAVACFFMPLTTITLSGLPPERLAAASSLSNFTRTLAGSIGTSITTTMWTNRESMHHAQLTESVNPFNPNAQAMYSQLEGLGMTQQQASGWIAQQITNQGLIISANEIFWMSAGIFLVLLGLVWFAKPPFGAGGGGGGAH</sequence>
<evidence type="ECO:0000250" key="1"/>
<evidence type="ECO:0000255" key="2"/>
<evidence type="ECO:0000305" key="3"/>
<accession>P0AEJ1</accession>
<accession>P27304</accession>
<accession>P77725</accession>
<protein>
    <recommendedName>
        <fullName>Multidrug export protein EmrB</fullName>
    </recommendedName>
</protein>
<keyword id="KW-0046">Antibiotic resistance</keyword>
<keyword id="KW-0997">Cell inner membrane</keyword>
<keyword id="KW-1003">Cell membrane</keyword>
<keyword id="KW-0472">Membrane</keyword>
<keyword id="KW-1185">Reference proteome</keyword>
<keyword id="KW-0812">Transmembrane</keyword>
<keyword id="KW-1133">Transmembrane helix</keyword>
<keyword id="KW-0813">Transport</keyword>
<organism>
    <name type="scientific">Escherichia coli O157:H7</name>
    <dbReference type="NCBI Taxonomy" id="83334"/>
    <lineage>
        <taxon>Bacteria</taxon>
        <taxon>Pseudomonadati</taxon>
        <taxon>Pseudomonadota</taxon>
        <taxon>Gammaproteobacteria</taxon>
        <taxon>Enterobacterales</taxon>
        <taxon>Enterobacteriaceae</taxon>
        <taxon>Escherichia</taxon>
    </lineage>
</organism>
<name>EMRB_ECO57</name>
<proteinExistence type="inferred from homology"/>
<gene>
    <name type="primary">emrB</name>
    <name type="ordered locus">Z3987</name>
    <name type="ordered locus">ECs3548</name>
</gene>